<accession>B5R422</accession>
<reference key="1">
    <citation type="journal article" date="2008" name="Genome Res.">
        <title>Comparative genome analysis of Salmonella enteritidis PT4 and Salmonella gallinarum 287/91 provides insights into evolutionary and host adaptation pathways.</title>
        <authorList>
            <person name="Thomson N.R."/>
            <person name="Clayton D.J."/>
            <person name="Windhorst D."/>
            <person name="Vernikos G."/>
            <person name="Davidson S."/>
            <person name="Churcher C."/>
            <person name="Quail M.A."/>
            <person name="Stevens M."/>
            <person name="Jones M.A."/>
            <person name="Watson M."/>
            <person name="Barron A."/>
            <person name="Layton A."/>
            <person name="Pickard D."/>
            <person name="Kingsley R.A."/>
            <person name="Bignell A."/>
            <person name="Clark L."/>
            <person name="Harris B."/>
            <person name="Ormond D."/>
            <person name="Abdellah Z."/>
            <person name="Brooks K."/>
            <person name="Cherevach I."/>
            <person name="Chillingworth T."/>
            <person name="Woodward J."/>
            <person name="Norberczak H."/>
            <person name="Lord A."/>
            <person name="Arrowsmith C."/>
            <person name="Jagels K."/>
            <person name="Moule S."/>
            <person name="Mungall K."/>
            <person name="Saunders M."/>
            <person name="Whitehead S."/>
            <person name="Chabalgoity J.A."/>
            <person name="Maskell D."/>
            <person name="Humphreys T."/>
            <person name="Roberts M."/>
            <person name="Barrow P.A."/>
            <person name="Dougan G."/>
            <person name="Parkhill J."/>
        </authorList>
    </citation>
    <scope>NUCLEOTIDE SEQUENCE [LARGE SCALE GENOMIC DNA]</scope>
    <source>
        <strain>P125109</strain>
    </source>
</reference>
<sequence length="198" mass="21507">MIEFVYPHTHLVAGVDEVGRGPLVGAVVTAAVILDPARPIVGLNDSKKLSEKRRLSLYDEIKEKALSWSLGRAEAHEIDELNILHATMLAMQRAVAGLHIAPEYVLIDGNRCPELPVPSMAVVKGDSRVAEISAASILAKVTRDAEMAALDIVFPQYGFAQHKGYPTAFHLEKLAQYGATAHHRRSFAPVKRALGLVS</sequence>
<dbReference type="EC" id="3.1.26.4" evidence="1"/>
<dbReference type="EMBL" id="AM933172">
    <property type="protein sequence ID" value="CAR31825.1"/>
    <property type="molecule type" value="Genomic_DNA"/>
</dbReference>
<dbReference type="RefSeq" id="WP_000569412.1">
    <property type="nucleotide sequence ID" value="NC_011294.1"/>
</dbReference>
<dbReference type="SMR" id="B5R422"/>
<dbReference type="KEGG" id="set:SEN0237"/>
<dbReference type="HOGENOM" id="CLU_036532_3_2_6"/>
<dbReference type="Proteomes" id="UP000000613">
    <property type="component" value="Chromosome"/>
</dbReference>
<dbReference type="GO" id="GO:0005737">
    <property type="term" value="C:cytoplasm"/>
    <property type="evidence" value="ECO:0007669"/>
    <property type="project" value="UniProtKB-SubCell"/>
</dbReference>
<dbReference type="GO" id="GO:0032299">
    <property type="term" value="C:ribonuclease H2 complex"/>
    <property type="evidence" value="ECO:0007669"/>
    <property type="project" value="TreeGrafter"/>
</dbReference>
<dbReference type="GO" id="GO:0030145">
    <property type="term" value="F:manganese ion binding"/>
    <property type="evidence" value="ECO:0007669"/>
    <property type="project" value="UniProtKB-UniRule"/>
</dbReference>
<dbReference type="GO" id="GO:0003723">
    <property type="term" value="F:RNA binding"/>
    <property type="evidence" value="ECO:0007669"/>
    <property type="project" value="InterPro"/>
</dbReference>
<dbReference type="GO" id="GO:0004523">
    <property type="term" value="F:RNA-DNA hybrid ribonuclease activity"/>
    <property type="evidence" value="ECO:0007669"/>
    <property type="project" value="UniProtKB-UniRule"/>
</dbReference>
<dbReference type="GO" id="GO:0043137">
    <property type="term" value="P:DNA replication, removal of RNA primer"/>
    <property type="evidence" value="ECO:0007669"/>
    <property type="project" value="TreeGrafter"/>
</dbReference>
<dbReference type="GO" id="GO:0006298">
    <property type="term" value="P:mismatch repair"/>
    <property type="evidence" value="ECO:0007669"/>
    <property type="project" value="TreeGrafter"/>
</dbReference>
<dbReference type="CDD" id="cd07182">
    <property type="entry name" value="RNase_HII_bacteria_HII_like"/>
    <property type="match status" value="1"/>
</dbReference>
<dbReference type="FunFam" id="3.30.420.10:FF:000006">
    <property type="entry name" value="Ribonuclease HII"/>
    <property type="match status" value="1"/>
</dbReference>
<dbReference type="Gene3D" id="3.30.420.10">
    <property type="entry name" value="Ribonuclease H-like superfamily/Ribonuclease H"/>
    <property type="match status" value="1"/>
</dbReference>
<dbReference type="HAMAP" id="MF_00052_B">
    <property type="entry name" value="RNase_HII_B"/>
    <property type="match status" value="1"/>
</dbReference>
<dbReference type="InterPro" id="IPR022898">
    <property type="entry name" value="RNase_HII"/>
</dbReference>
<dbReference type="InterPro" id="IPR001352">
    <property type="entry name" value="RNase_HII/HIII"/>
</dbReference>
<dbReference type="InterPro" id="IPR024567">
    <property type="entry name" value="RNase_HII/HIII_dom"/>
</dbReference>
<dbReference type="InterPro" id="IPR012337">
    <property type="entry name" value="RNaseH-like_sf"/>
</dbReference>
<dbReference type="InterPro" id="IPR036397">
    <property type="entry name" value="RNaseH_sf"/>
</dbReference>
<dbReference type="NCBIfam" id="NF000594">
    <property type="entry name" value="PRK00015.1-1"/>
    <property type="match status" value="1"/>
</dbReference>
<dbReference type="NCBIfam" id="NF000595">
    <property type="entry name" value="PRK00015.1-3"/>
    <property type="match status" value="1"/>
</dbReference>
<dbReference type="NCBIfam" id="NF000596">
    <property type="entry name" value="PRK00015.1-4"/>
    <property type="match status" value="1"/>
</dbReference>
<dbReference type="PANTHER" id="PTHR10954">
    <property type="entry name" value="RIBONUCLEASE H2 SUBUNIT A"/>
    <property type="match status" value="1"/>
</dbReference>
<dbReference type="PANTHER" id="PTHR10954:SF18">
    <property type="entry name" value="RIBONUCLEASE HII"/>
    <property type="match status" value="1"/>
</dbReference>
<dbReference type="Pfam" id="PF01351">
    <property type="entry name" value="RNase_HII"/>
    <property type="match status" value="1"/>
</dbReference>
<dbReference type="SUPFAM" id="SSF53098">
    <property type="entry name" value="Ribonuclease H-like"/>
    <property type="match status" value="1"/>
</dbReference>
<dbReference type="PROSITE" id="PS51975">
    <property type="entry name" value="RNASE_H_2"/>
    <property type="match status" value="1"/>
</dbReference>
<gene>
    <name evidence="1" type="primary">rnhB</name>
    <name type="ordered locus">SEN0237</name>
</gene>
<proteinExistence type="inferred from homology"/>
<organism>
    <name type="scientific">Salmonella enteritidis PT4 (strain P125109)</name>
    <dbReference type="NCBI Taxonomy" id="550537"/>
    <lineage>
        <taxon>Bacteria</taxon>
        <taxon>Pseudomonadati</taxon>
        <taxon>Pseudomonadota</taxon>
        <taxon>Gammaproteobacteria</taxon>
        <taxon>Enterobacterales</taxon>
        <taxon>Enterobacteriaceae</taxon>
        <taxon>Salmonella</taxon>
    </lineage>
</organism>
<feature type="chain" id="PRO_1000091650" description="Ribonuclease HII">
    <location>
        <begin position="1"/>
        <end position="198"/>
    </location>
</feature>
<feature type="domain" description="RNase H type-2" evidence="2">
    <location>
        <begin position="10"/>
        <end position="198"/>
    </location>
</feature>
<feature type="binding site" evidence="1">
    <location>
        <position position="16"/>
    </location>
    <ligand>
        <name>a divalent metal cation</name>
        <dbReference type="ChEBI" id="CHEBI:60240"/>
    </ligand>
</feature>
<feature type="binding site" evidence="1">
    <location>
        <position position="17"/>
    </location>
    <ligand>
        <name>a divalent metal cation</name>
        <dbReference type="ChEBI" id="CHEBI:60240"/>
    </ligand>
</feature>
<feature type="binding site" evidence="1">
    <location>
        <position position="108"/>
    </location>
    <ligand>
        <name>a divalent metal cation</name>
        <dbReference type="ChEBI" id="CHEBI:60240"/>
    </ligand>
</feature>
<comment type="function">
    <text evidence="1">Endonuclease that specifically degrades the RNA of RNA-DNA hybrids.</text>
</comment>
<comment type="catalytic activity">
    <reaction evidence="1">
        <text>Endonucleolytic cleavage to 5'-phosphomonoester.</text>
        <dbReference type="EC" id="3.1.26.4"/>
    </reaction>
</comment>
<comment type="cofactor">
    <cofactor evidence="1">
        <name>Mn(2+)</name>
        <dbReference type="ChEBI" id="CHEBI:29035"/>
    </cofactor>
    <cofactor evidence="1">
        <name>Mg(2+)</name>
        <dbReference type="ChEBI" id="CHEBI:18420"/>
    </cofactor>
    <text evidence="1">Manganese or magnesium. Binds 1 divalent metal ion per monomer in the absence of substrate. May bind a second metal ion after substrate binding.</text>
</comment>
<comment type="subcellular location">
    <subcellularLocation>
        <location evidence="1">Cytoplasm</location>
    </subcellularLocation>
</comment>
<comment type="similarity">
    <text evidence="1">Belongs to the RNase HII family.</text>
</comment>
<protein>
    <recommendedName>
        <fullName evidence="1">Ribonuclease HII</fullName>
        <shortName evidence="1">RNase HII</shortName>
        <ecNumber evidence="1">3.1.26.4</ecNumber>
    </recommendedName>
</protein>
<keyword id="KW-0963">Cytoplasm</keyword>
<keyword id="KW-0255">Endonuclease</keyword>
<keyword id="KW-0378">Hydrolase</keyword>
<keyword id="KW-0464">Manganese</keyword>
<keyword id="KW-0479">Metal-binding</keyword>
<keyword id="KW-0540">Nuclease</keyword>
<name>RNH2_SALEP</name>
<evidence type="ECO:0000255" key="1">
    <source>
        <dbReference type="HAMAP-Rule" id="MF_00052"/>
    </source>
</evidence>
<evidence type="ECO:0000255" key="2">
    <source>
        <dbReference type="PROSITE-ProRule" id="PRU01319"/>
    </source>
</evidence>